<feature type="chain" id="PRO_1000021994" description="RNA pyrophosphohydrolase">
    <location>
        <begin position="1"/>
        <end position="174"/>
    </location>
</feature>
<feature type="domain" description="Nudix hydrolase" evidence="1">
    <location>
        <begin position="6"/>
        <end position="149"/>
    </location>
</feature>
<feature type="short sequence motif" description="Nudix box">
    <location>
        <begin position="38"/>
        <end position="59"/>
    </location>
</feature>
<organism>
    <name type="scientific">Shewanella baltica (strain OS185)</name>
    <dbReference type="NCBI Taxonomy" id="402882"/>
    <lineage>
        <taxon>Bacteria</taxon>
        <taxon>Pseudomonadati</taxon>
        <taxon>Pseudomonadota</taxon>
        <taxon>Gammaproteobacteria</taxon>
        <taxon>Alteromonadales</taxon>
        <taxon>Shewanellaceae</taxon>
        <taxon>Shewanella</taxon>
    </lineage>
</organism>
<sequence length="174" mass="20574">MIDSDGFRANVGIIICNRYGQVMWARRFGQHSWQFPQGGVDDGETAEEAMYRELYEEVGLRPEHVHILTSTRSWLRYRLPKRLVRQDSKPVCIGQKQKWFLLQLKSQDSAINLSSSGHPEFDDWRWVSYWYPVRQVVSFKRDVYRKVMKEFAVTALSFQTLEIPRKRGRQKTTG</sequence>
<keyword id="KW-0378">Hydrolase</keyword>
<dbReference type="EC" id="3.6.1.-" evidence="1"/>
<dbReference type="EMBL" id="CP000753">
    <property type="protein sequence ID" value="ABS07379.1"/>
    <property type="molecule type" value="Genomic_DNA"/>
</dbReference>
<dbReference type="RefSeq" id="WP_006080762.1">
    <property type="nucleotide sequence ID" value="NC_009665.1"/>
</dbReference>
<dbReference type="SMR" id="A6WKP0"/>
<dbReference type="GeneID" id="11771531"/>
<dbReference type="KEGG" id="sbm:Shew185_1228"/>
<dbReference type="HOGENOM" id="CLU_087195_3_1_6"/>
<dbReference type="GO" id="GO:0005737">
    <property type="term" value="C:cytoplasm"/>
    <property type="evidence" value="ECO:0007669"/>
    <property type="project" value="TreeGrafter"/>
</dbReference>
<dbReference type="GO" id="GO:0034353">
    <property type="term" value="F:mRNA 5'-diphosphatase activity"/>
    <property type="evidence" value="ECO:0007669"/>
    <property type="project" value="TreeGrafter"/>
</dbReference>
<dbReference type="GO" id="GO:0006402">
    <property type="term" value="P:mRNA catabolic process"/>
    <property type="evidence" value="ECO:0007669"/>
    <property type="project" value="TreeGrafter"/>
</dbReference>
<dbReference type="CDD" id="cd03671">
    <property type="entry name" value="NUDIX_Ap4A_hydrolase_plant_like"/>
    <property type="match status" value="1"/>
</dbReference>
<dbReference type="FunFam" id="3.90.79.10:FF:000001">
    <property type="entry name" value="RNA pyrophosphohydrolase"/>
    <property type="match status" value="1"/>
</dbReference>
<dbReference type="Gene3D" id="3.90.79.10">
    <property type="entry name" value="Nucleoside Triphosphate Pyrophosphohydrolase"/>
    <property type="match status" value="1"/>
</dbReference>
<dbReference type="HAMAP" id="MF_00298">
    <property type="entry name" value="Nudix_RppH"/>
    <property type="match status" value="1"/>
</dbReference>
<dbReference type="InterPro" id="IPR020476">
    <property type="entry name" value="Nudix_hydrolase"/>
</dbReference>
<dbReference type="InterPro" id="IPR015797">
    <property type="entry name" value="NUDIX_hydrolase-like_dom_sf"/>
</dbReference>
<dbReference type="InterPro" id="IPR020084">
    <property type="entry name" value="NUDIX_hydrolase_CS"/>
</dbReference>
<dbReference type="InterPro" id="IPR000086">
    <property type="entry name" value="NUDIX_hydrolase_dom"/>
</dbReference>
<dbReference type="InterPro" id="IPR022927">
    <property type="entry name" value="RppH"/>
</dbReference>
<dbReference type="NCBIfam" id="NF001934">
    <property type="entry name" value="PRK00714.1-1"/>
    <property type="match status" value="1"/>
</dbReference>
<dbReference type="NCBIfam" id="NF001937">
    <property type="entry name" value="PRK00714.1-4"/>
    <property type="match status" value="1"/>
</dbReference>
<dbReference type="NCBIfam" id="NF001938">
    <property type="entry name" value="PRK00714.1-5"/>
    <property type="match status" value="1"/>
</dbReference>
<dbReference type="PANTHER" id="PTHR23114">
    <property type="entry name" value="M7GPPPN-MRNA HYDROLASE"/>
    <property type="match status" value="1"/>
</dbReference>
<dbReference type="PANTHER" id="PTHR23114:SF17">
    <property type="entry name" value="M7GPPPN-MRNA HYDROLASE"/>
    <property type="match status" value="1"/>
</dbReference>
<dbReference type="Pfam" id="PF00293">
    <property type="entry name" value="NUDIX"/>
    <property type="match status" value="1"/>
</dbReference>
<dbReference type="PRINTS" id="PR00502">
    <property type="entry name" value="NUDIXFAMILY"/>
</dbReference>
<dbReference type="SUPFAM" id="SSF55811">
    <property type="entry name" value="Nudix"/>
    <property type="match status" value="1"/>
</dbReference>
<dbReference type="PROSITE" id="PS51462">
    <property type="entry name" value="NUDIX"/>
    <property type="match status" value="1"/>
</dbReference>
<dbReference type="PROSITE" id="PS00893">
    <property type="entry name" value="NUDIX_BOX"/>
    <property type="match status" value="1"/>
</dbReference>
<comment type="function">
    <text evidence="1">Accelerates the degradation of transcripts by removing pyrophosphate from the 5'-end of triphosphorylated RNA, leading to a more labile monophosphorylated state that can stimulate subsequent ribonuclease cleavage.</text>
</comment>
<comment type="cofactor">
    <cofactor evidence="1">
        <name>a divalent metal cation</name>
        <dbReference type="ChEBI" id="CHEBI:60240"/>
    </cofactor>
</comment>
<comment type="similarity">
    <text evidence="1">Belongs to the Nudix hydrolase family. RppH subfamily.</text>
</comment>
<gene>
    <name evidence="1" type="primary">rppH</name>
    <name evidence="1" type="synonym">nudH</name>
    <name type="ordered locus">Shew185_1228</name>
</gene>
<name>RPPH_SHEB8</name>
<accession>A6WKP0</accession>
<proteinExistence type="inferred from homology"/>
<reference key="1">
    <citation type="submission" date="2007-07" db="EMBL/GenBank/DDBJ databases">
        <title>Complete sequence of chromosome of Shewanella baltica OS185.</title>
        <authorList>
            <consortium name="US DOE Joint Genome Institute"/>
            <person name="Copeland A."/>
            <person name="Lucas S."/>
            <person name="Lapidus A."/>
            <person name="Barry K."/>
            <person name="Glavina del Rio T."/>
            <person name="Dalin E."/>
            <person name="Tice H."/>
            <person name="Pitluck S."/>
            <person name="Sims D."/>
            <person name="Brettin T."/>
            <person name="Bruce D."/>
            <person name="Detter J.C."/>
            <person name="Han C."/>
            <person name="Schmutz J."/>
            <person name="Larimer F."/>
            <person name="Land M."/>
            <person name="Hauser L."/>
            <person name="Kyrpides N."/>
            <person name="Mikhailova N."/>
            <person name="Brettar I."/>
            <person name="Rodrigues J."/>
            <person name="Konstantinidis K."/>
            <person name="Tiedje J."/>
            <person name="Richardson P."/>
        </authorList>
    </citation>
    <scope>NUCLEOTIDE SEQUENCE [LARGE SCALE GENOMIC DNA]</scope>
    <source>
        <strain>OS185</strain>
    </source>
</reference>
<protein>
    <recommendedName>
        <fullName evidence="1">RNA pyrophosphohydrolase</fullName>
        <ecNumber evidence="1">3.6.1.-</ecNumber>
    </recommendedName>
    <alternativeName>
        <fullName evidence="1">(Di)nucleoside polyphosphate hydrolase</fullName>
    </alternativeName>
</protein>
<evidence type="ECO:0000255" key="1">
    <source>
        <dbReference type="HAMAP-Rule" id="MF_00298"/>
    </source>
</evidence>